<organism>
    <name type="scientific">Frankia casuarinae (strain DSM 45818 / CECT 9043 / HFP020203 / CcI3)</name>
    <dbReference type="NCBI Taxonomy" id="106370"/>
    <lineage>
        <taxon>Bacteria</taxon>
        <taxon>Bacillati</taxon>
        <taxon>Actinomycetota</taxon>
        <taxon>Actinomycetes</taxon>
        <taxon>Frankiales</taxon>
        <taxon>Frankiaceae</taxon>
        <taxon>Frankia</taxon>
    </lineage>
</organism>
<evidence type="ECO:0000255" key="1">
    <source>
        <dbReference type="HAMAP-Rule" id="MF_00624"/>
    </source>
</evidence>
<dbReference type="EC" id="2.7.7.27" evidence="1"/>
<dbReference type="EMBL" id="CP000249">
    <property type="protein sequence ID" value="ABD11043.1"/>
    <property type="molecule type" value="Genomic_DNA"/>
</dbReference>
<dbReference type="RefSeq" id="WP_011436106.1">
    <property type="nucleotide sequence ID" value="NZ_JENI01000041.1"/>
</dbReference>
<dbReference type="SMR" id="Q2JCE9"/>
<dbReference type="STRING" id="106370.Francci3_1667"/>
<dbReference type="KEGG" id="fra:Francci3_1667"/>
<dbReference type="eggNOG" id="COG0448">
    <property type="taxonomic scope" value="Bacteria"/>
</dbReference>
<dbReference type="HOGENOM" id="CLU_029499_14_1_11"/>
<dbReference type="OrthoDB" id="9801810at2"/>
<dbReference type="PhylomeDB" id="Q2JCE9"/>
<dbReference type="UniPathway" id="UPA00164"/>
<dbReference type="Proteomes" id="UP000001937">
    <property type="component" value="Chromosome"/>
</dbReference>
<dbReference type="GO" id="GO:0005524">
    <property type="term" value="F:ATP binding"/>
    <property type="evidence" value="ECO:0007669"/>
    <property type="project" value="UniProtKB-KW"/>
</dbReference>
<dbReference type="GO" id="GO:0008878">
    <property type="term" value="F:glucose-1-phosphate adenylyltransferase activity"/>
    <property type="evidence" value="ECO:0007669"/>
    <property type="project" value="UniProtKB-UniRule"/>
</dbReference>
<dbReference type="GO" id="GO:0005978">
    <property type="term" value="P:glycogen biosynthetic process"/>
    <property type="evidence" value="ECO:0007669"/>
    <property type="project" value="UniProtKB-UniRule"/>
</dbReference>
<dbReference type="CDD" id="cd02508">
    <property type="entry name" value="ADP_Glucose_PP"/>
    <property type="match status" value="1"/>
</dbReference>
<dbReference type="CDD" id="cd04651">
    <property type="entry name" value="LbH_G1P_AT_C"/>
    <property type="match status" value="1"/>
</dbReference>
<dbReference type="Gene3D" id="2.160.10.10">
    <property type="entry name" value="Hexapeptide repeat proteins"/>
    <property type="match status" value="1"/>
</dbReference>
<dbReference type="Gene3D" id="3.90.550.10">
    <property type="entry name" value="Spore Coat Polysaccharide Biosynthesis Protein SpsA, Chain A"/>
    <property type="match status" value="1"/>
</dbReference>
<dbReference type="HAMAP" id="MF_00624">
    <property type="entry name" value="GlgC"/>
    <property type="match status" value="1"/>
</dbReference>
<dbReference type="InterPro" id="IPR011831">
    <property type="entry name" value="ADP-Glc_PPase"/>
</dbReference>
<dbReference type="InterPro" id="IPR005836">
    <property type="entry name" value="ADP_Glu_pyroP_CS"/>
</dbReference>
<dbReference type="InterPro" id="IPR023049">
    <property type="entry name" value="GlgC_bac"/>
</dbReference>
<dbReference type="InterPro" id="IPR056818">
    <property type="entry name" value="GlmU/GlgC-like_hexapep"/>
</dbReference>
<dbReference type="InterPro" id="IPR005835">
    <property type="entry name" value="NTP_transferase_dom"/>
</dbReference>
<dbReference type="InterPro" id="IPR029044">
    <property type="entry name" value="Nucleotide-diphossugar_trans"/>
</dbReference>
<dbReference type="InterPro" id="IPR011004">
    <property type="entry name" value="Trimer_LpxA-like_sf"/>
</dbReference>
<dbReference type="NCBIfam" id="TIGR02091">
    <property type="entry name" value="glgC"/>
    <property type="match status" value="1"/>
</dbReference>
<dbReference type="NCBIfam" id="NF001947">
    <property type="entry name" value="PRK00725.1"/>
    <property type="match status" value="1"/>
</dbReference>
<dbReference type="NCBIfam" id="NF002023">
    <property type="entry name" value="PRK00844.1"/>
    <property type="match status" value="1"/>
</dbReference>
<dbReference type="PANTHER" id="PTHR43523:SF2">
    <property type="entry name" value="GLUCOSE-1-PHOSPHATE ADENYLYLTRANSFERASE"/>
    <property type="match status" value="1"/>
</dbReference>
<dbReference type="PANTHER" id="PTHR43523">
    <property type="entry name" value="GLUCOSE-1-PHOSPHATE ADENYLYLTRANSFERASE-RELATED"/>
    <property type="match status" value="1"/>
</dbReference>
<dbReference type="Pfam" id="PF24894">
    <property type="entry name" value="Hexapep_GlmU"/>
    <property type="match status" value="1"/>
</dbReference>
<dbReference type="Pfam" id="PF00483">
    <property type="entry name" value="NTP_transferase"/>
    <property type="match status" value="1"/>
</dbReference>
<dbReference type="SUPFAM" id="SSF53448">
    <property type="entry name" value="Nucleotide-diphospho-sugar transferases"/>
    <property type="match status" value="1"/>
</dbReference>
<dbReference type="SUPFAM" id="SSF51161">
    <property type="entry name" value="Trimeric LpxA-like enzymes"/>
    <property type="match status" value="1"/>
</dbReference>
<dbReference type="PROSITE" id="PS00809">
    <property type="entry name" value="ADP_GLC_PYROPHOSPH_2"/>
    <property type="match status" value="1"/>
</dbReference>
<dbReference type="PROSITE" id="PS00810">
    <property type="entry name" value="ADP_GLC_PYROPHOSPH_3"/>
    <property type="match status" value="1"/>
</dbReference>
<reference key="1">
    <citation type="journal article" date="2007" name="Genome Res.">
        <title>Genome characteristics of facultatively symbiotic Frankia sp. strains reflect host range and host plant biogeography.</title>
        <authorList>
            <person name="Normand P."/>
            <person name="Lapierre P."/>
            <person name="Tisa L.S."/>
            <person name="Gogarten J.P."/>
            <person name="Alloisio N."/>
            <person name="Bagnarol E."/>
            <person name="Bassi C.A."/>
            <person name="Berry A.M."/>
            <person name="Bickhart D.M."/>
            <person name="Choisne N."/>
            <person name="Couloux A."/>
            <person name="Cournoyer B."/>
            <person name="Cruveiller S."/>
            <person name="Daubin V."/>
            <person name="Demange N."/>
            <person name="Francino M.P."/>
            <person name="Goltsman E."/>
            <person name="Huang Y."/>
            <person name="Kopp O.R."/>
            <person name="Labarre L."/>
            <person name="Lapidus A."/>
            <person name="Lavire C."/>
            <person name="Marechal J."/>
            <person name="Martinez M."/>
            <person name="Mastronunzio J.E."/>
            <person name="Mullin B.C."/>
            <person name="Niemann J."/>
            <person name="Pujic P."/>
            <person name="Rawnsley T."/>
            <person name="Rouy Z."/>
            <person name="Schenowitz C."/>
            <person name="Sellstedt A."/>
            <person name="Tavares F."/>
            <person name="Tomkins J.P."/>
            <person name="Vallenet D."/>
            <person name="Valverde C."/>
            <person name="Wall L.G."/>
            <person name="Wang Y."/>
            <person name="Medigue C."/>
            <person name="Benson D.R."/>
        </authorList>
    </citation>
    <scope>NUCLEOTIDE SEQUENCE [LARGE SCALE GENOMIC DNA]</scope>
    <source>
        <strain>DSM 45818 / CECT 9043 / HFP020203 / CcI3</strain>
    </source>
</reference>
<feature type="chain" id="PRO_0000261871" description="Glucose-1-phosphate adenylyltransferase">
    <location>
        <begin position="1"/>
        <end position="412"/>
    </location>
</feature>
<feature type="binding site" evidence="1">
    <location>
        <position position="163"/>
    </location>
    <ligand>
        <name>alpha-D-glucose 1-phosphate</name>
        <dbReference type="ChEBI" id="CHEBI:58601"/>
    </ligand>
</feature>
<feature type="binding site" evidence="1">
    <location>
        <begin position="179"/>
        <end position="180"/>
    </location>
    <ligand>
        <name>alpha-D-glucose 1-phosphate</name>
        <dbReference type="ChEBI" id="CHEBI:58601"/>
    </ligand>
</feature>
<feature type="binding site" evidence="1">
    <location>
        <position position="197"/>
    </location>
    <ligand>
        <name>alpha-D-glucose 1-phosphate</name>
        <dbReference type="ChEBI" id="CHEBI:58601"/>
    </ligand>
</feature>
<gene>
    <name evidence="1" type="primary">glgC</name>
    <name type="ordered locus">Francci3_1667</name>
</gene>
<accession>Q2JCE9</accession>
<comment type="function">
    <text evidence="1">Involved in the biosynthesis of ADP-glucose, a building block required for the elongation reactions to produce glycogen. Catalyzes the reaction between ATP and alpha-D-glucose 1-phosphate (G1P) to produce pyrophosphate and ADP-Glc.</text>
</comment>
<comment type="catalytic activity">
    <reaction evidence="1">
        <text>alpha-D-glucose 1-phosphate + ATP + H(+) = ADP-alpha-D-glucose + diphosphate</text>
        <dbReference type="Rhea" id="RHEA:12120"/>
        <dbReference type="ChEBI" id="CHEBI:15378"/>
        <dbReference type="ChEBI" id="CHEBI:30616"/>
        <dbReference type="ChEBI" id="CHEBI:33019"/>
        <dbReference type="ChEBI" id="CHEBI:57498"/>
        <dbReference type="ChEBI" id="CHEBI:58601"/>
        <dbReference type="EC" id="2.7.7.27"/>
    </reaction>
</comment>
<comment type="pathway">
    <text evidence="1">Glycan biosynthesis; glycogen biosynthesis.</text>
</comment>
<comment type="subunit">
    <text evidence="1">Homotetramer.</text>
</comment>
<comment type="similarity">
    <text evidence="1">Belongs to the bacterial/plant glucose-1-phosphate adenylyltransferase family.</text>
</comment>
<protein>
    <recommendedName>
        <fullName evidence="1">Glucose-1-phosphate adenylyltransferase</fullName>
        <ecNumber evidence="1">2.7.7.27</ecNumber>
    </recommendedName>
    <alternativeName>
        <fullName evidence="1">ADP-glucose pyrophosphorylase</fullName>
        <shortName evidence="1">ADPGlc PPase</shortName>
    </alternativeName>
    <alternativeName>
        <fullName evidence="1">ADP-glucose synthase</fullName>
    </alternativeName>
</protein>
<sequence>MPSPRVLGLVLAGGAGRRLAPLTADRAKPAVPFGGLYRLIDFVLSNLVNAGYLRIAVLTQYKSHSLDRHITTTWRMSNLLGNYVTPVPAQQRLGPRWFAGSADAIHQSLNLVYDDAPDIVVVFGADHVYRMDPRQMVAQHLDSGAGVTVAGLRVPRSEGRAFGVIQTAPDGRTIEAFLEKPADPPGLPGSPEETFASMGNYVFSTDVLIDALRKDAADEDSVHDMGGNIIPMLVAQRAAAVYDFAGNVVPGTTVRDRGYWRDVGTVDSYFEAQMDLCALDPVFNLYNREWPILTSIPSLPPAKFVHDGLQRTGTAVNSIVSNGVIISGGTVRSSVLSPGVRVSSWAEVDHTVLMDNVLVGRGAVVRDAILDKNVHVPAGAQVGVDKDRDRARGYTVSEQGITVVGKGVTIAD</sequence>
<proteinExistence type="inferred from homology"/>
<name>GLGC_FRACC</name>
<keyword id="KW-0067">ATP-binding</keyword>
<keyword id="KW-0119">Carbohydrate metabolism</keyword>
<keyword id="KW-0320">Glycogen biosynthesis</keyword>
<keyword id="KW-0321">Glycogen metabolism</keyword>
<keyword id="KW-0547">Nucleotide-binding</keyword>
<keyword id="KW-0548">Nucleotidyltransferase</keyword>
<keyword id="KW-1185">Reference proteome</keyword>
<keyword id="KW-0808">Transferase</keyword>